<gene>
    <name type="primary">ND3</name>
</gene>
<evidence type="ECO:0000250" key="1"/>
<evidence type="ECO:0000255" key="2"/>
<evidence type="ECO:0000305" key="3"/>
<reference key="1">
    <citation type="journal article" date="1998" name="J. Mol. Evol.">
        <title>Mitochondrial DNA of the coral Sarcophyton glaucum contains a gene for a homologue of bacterial MutS: a possible case of gene transfer from the nucleus to the mitochondrion.</title>
        <authorList>
            <person name="Pont-Kingdon G."/>
            <person name="Okada N.A."/>
            <person name="Macfarlane J.L."/>
            <person name="Beagley C.T."/>
            <person name="Watkins-Sims C.D."/>
            <person name="Cavalier-Smith T."/>
            <person name="Clark-Walker G.D."/>
            <person name="Wolstenholme D.R."/>
        </authorList>
    </citation>
    <scope>NUCLEOTIDE SEQUENCE [GENOMIC DNA]</scope>
</reference>
<feature type="chain" id="PRO_0000117828" description="NADH-ubiquinone oxidoreductase chain 3">
    <location>
        <begin position="1"/>
        <end position="117"/>
    </location>
</feature>
<feature type="transmembrane region" description="Helical" evidence="2">
    <location>
        <begin position="6"/>
        <end position="26"/>
    </location>
</feature>
<feature type="transmembrane region" description="Helical" evidence="2">
    <location>
        <begin position="58"/>
        <end position="78"/>
    </location>
</feature>
<feature type="transmembrane region" description="Helical" evidence="2">
    <location>
        <begin position="85"/>
        <end position="105"/>
    </location>
</feature>
<comment type="function">
    <text evidence="1">Core subunit of the mitochondrial membrane respiratory chain NADH dehydrogenase (Complex I) that is believed to belong to the minimal assembly required for catalysis. Complex I functions in the transfer of electrons from NADH to the respiratory chain. The immediate electron acceptor for the enzyme is believed to be ubiquinone (By similarity).</text>
</comment>
<comment type="catalytic activity">
    <reaction>
        <text>a ubiquinone + NADH + 5 H(+)(in) = a ubiquinol + NAD(+) + 4 H(+)(out)</text>
        <dbReference type="Rhea" id="RHEA:29091"/>
        <dbReference type="Rhea" id="RHEA-COMP:9565"/>
        <dbReference type="Rhea" id="RHEA-COMP:9566"/>
        <dbReference type="ChEBI" id="CHEBI:15378"/>
        <dbReference type="ChEBI" id="CHEBI:16389"/>
        <dbReference type="ChEBI" id="CHEBI:17976"/>
        <dbReference type="ChEBI" id="CHEBI:57540"/>
        <dbReference type="ChEBI" id="CHEBI:57945"/>
        <dbReference type="EC" id="7.1.1.2"/>
    </reaction>
</comment>
<comment type="subcellular location">
    <subcellularLocation>
        <location evidence="1">Mitochondrion membrane</location>
        <topology evidence="1">Multi-pass membrane protein</topology>
    </subcellularLocation>
</comment>
<comment type="similarity">
    <text evidence="3">Belongs to the complex I subunit 3 family.</text>
</comment>
<geneLocation type="mitochondrion"/>
<dbReference type="EC" id="7.1.1.2"/>
<dbReference type="EMBL" id="AF063191">
    <property type="protein sequence ID" value="AAC16384.1"/>
    <property type="molecule type" value="Genomic_DNA"/>
</dbReference>
<dbReference type="SMR" id="O63850"/>
<dbReference type="GO" id="GO:0031966">
    <property type="term" value="C:mitochondrial membrane"/>
    <property type="evidence" value="ECO:0007669"/>
    <property type="project" value="UniProtKB-SubCell"/>
</dbReference>
<dbReference type="GO" id="GO:0030964">
    <property type="term" value="C:NADH dehydrogenase complex"/>
    <property type="evidence" value="ECO:0007669"/>
    <property type="project" value="TreeGrafter"/>
</dbReference>
<dbReference type="GO" id="GO:0008137">
    <property type="term" value="F:NADH dehydrogenase (ubiquinone) activity"/>
    <property type="evidence" value="ECO:0007669"/>
    <property type="project" value="UniProtKB-EC"/>
</dbReference>
<dbReference type="FunFam" id="1.20.58.1610:FF:000004">
    <property type="entry name" value="NADH-quinone oxidoreductase subunit A"/>
    <property type="match status" value="1"/>
</dbReference>
<dbReference type="Gene3D" id="1.20.58.1610">
    <property type="entry name" value="NADH:ubiquinone/plastoquinone oxidoreductase, chain 3"/>
    <property type="match status" value="1"/>
</dbReference>
<dbReference type="InterPro" id="IPR000440">
    <property type="entry name" value="NADH_UbQ/plastoQ_OxRdtase_su3"/>
</dbReference>
<dbReference type="InterPro" id="IPR038430">
    <property type="entry name" value="NDAH_ubi_oxred_su3_sf"/>
</dbReference>
<dbReference type="PANTHER" id="PTHR11058">
    <property type="entry name" value="NADH-UBIQUINONE OXIDOREDUCTASE CHAIN 3"/>
    <property type="match status" value="1"/>
</dbReference>
<dbReference type="PANTHER" id="PTHR11058:SF9">
    <property type="entry name" value="NADH-UBIQUINONE OXIDOREDUCTASE CHAIN 3"/>
    <property type="match status" value="1"/>
</dbReference>
<dbReference type="Pfam" id="PF00507">
    <property type="entry name" value="Oxidored_q4"/>
    <property type="match status" value="1"/>
</dbReference>
<proteinExistence type="inferred from homology"/>
<protein>
    <recommendedName>
        <fullName>NADH-ubiquinone oxidoreductase chain 3</fullName>
        <ecNumber>7.1.1.2</ecNumber>
    </recommendedName>
    <alternativeName>
        <fullName>NADH dehydrogenase subunit 3</fullName>
    </alternativeName>
</protein>
<sequence length="117" mass="13465">MEFKGILILLIISGTLSILILGASYILGYKQPDMEKVSVYECGFDPFDNPGNPFSVRFFLIGILFLIFDLEISFLFPWAVTYMGLPLFGYWVVMLFLFILTLGLIYEWIEGGLEWEN</sequence>
<organism>
    <name type="scientific">Sarcophyton glaucum</name>
    <name type="common">Toadstool umbrella leather coral</name>
    <dbReference type="NCBI Taxonomy" id="70919"/>
    <lineage>
        <taxon>Eukaryota</taxon>
        <taxon>Metazoa</taxon>
        <taxon>Cnidaria</taxon>
        <taxon>Anthozoa</taxon>
        <taxon>Octocorallia</taxon>
        <taxon>Malacalcyonacea</taxon>
        <taxon>Alcyoniidae</taxon>
        <taxon>Sarcophyton</taxon>
    </lineage>
</organism>
<name>NU3M_SARGL</name>
<accession>O63850</accession>
<keyword id="KW-0249">Electron transport</keyword>
<keyword id="KW-0472">Membrane</keyword>
<keyword id="KW-0496">Mitochondrion</keyword>
<keyword id="KW-0520">NAD</keyword>
<keyword id="KW-0679">Respiratory chain</keyword>
<keyword id="KW-1278">Translocase</keyword>
<keyword id="KW-0812">Transmembrane</keyword>
<keyword id="KW-1133">Transmembrane helix</keyword>
<keyword id="KW-0813">Transport</keyword>
<keyword id="KW-0830">Ubiquinone</keyword>